<dbReference type="EC" id="6.3.1.2"/>
<dbReference type="EMBL" id="AAFI02000031">
    <property type="protein sequence ID" value="EAL67734.1"/>
    <property type="molecule type" value="Genomic_DNA"/>
</dbReference>
<dbReference type="RefSeq" id="XP_641648.1">
    <property type="nucleotide sequence ID" value="XM_636556.1"/>
</dbReference>
<dbReference type="SMR" id="Q54WR9"/>
<dbReference type="FunCoup" id="Q54WR9">
    <property type="interactions" value="92"/>
</dbReference>
<dbReference type="STRING" id="44689.Q54WR9"/>
<dbReference type="PaxDb" id="44689-DDB0231551"/>
<dbReference type="EnsemblProtists" id="EAL67734">
    <property type="protein sequence ID" value="EAL67734"/>
    <property type="gene ID" value="DDB_G0279591"/>
</dbReference>
<dbReference type="GeneID" id="8622055"/>
<dbReference type="KEGG" id="ddi:DDB_G0279591"/>
<dbReference type="dictyBase" id="DDB_G0279591">
    <property type="gene designation" value="glnA3"/>
</dbReference>
<dbReference type="VEuPathDB" id="AmoebaDB:DDB_G0279591"/>
<dbReference type="eggNOG" id="ENOG502QQE3">
    <property type="taxonomic scope" value="Eukaryota"/>
</dbReference>
<dbReference type="HOGENOM" id="CLU_024307_0_0_1"/>
<dbReference type="InParanoid" id="Q54WR9"/>
<dbReference type="OMA" id="QFLVFCA"/>
<dbReference type="PhylomeDB" id="Q54WR9"/>
<dbReference type="PRO" id="PR:Q54WR9"/>
<dbReference type="Proteomes" id="UP000002195">
    <property type="component" value="Chromosome 3"/>
</dbReference>
<dbReference type="GO" id="GO:0045335">
    <property type="term" value="C:phagocytic vesicle"/>
    <property type="evidence" value="ECO:0007005"/>
    <property type="project" value="dictyBase"/>
</dbReference>
<dbReference type="GO" id="GO:0005524">
    <property type="term" value="F:ATP binding"/>
    <property type="evidence" value="ECO:0007669"/>
    <property type="project" value="UniProtKB-KW"/>
</dbReference>
<dbReference type="GO" id="GO:0004356">
    <property type="term" value="F:glutamine synthetase activity"/>
    <property type="evidence" value="ECO:0007669"/>
    <property type="project" value="UniProtKB-EC"/>
</dbReference>
<dbReference type="GO" id="GO:0006542">
    <property type="term" value="P:glutamine biosynthetic process"/>
    <property type="evidence" value="ECO:0007669"/>
    <property type="project" value="InterPro"/>
</dbReference>
<dbReference type="GO" id="GO:0009617">
    <property type="term" value="P:response to bacterium"/>
    <property type="evidence" value="ECO:0007007"/>
    <property type="project" value="dictyBase"/>
</dbReference>
<dbReference type="Gene3D" id="1.20.120.1560">
    <property type="match status" value="1"/>
</dbReference>
<dbReference type="Gene3D" id="3.30.590.10">
    <property type="entry name" value="Glutamine synthetase/guanido kinase, catalytic domain"/>
    <property type="match status" value="1"/>
</dbReference>
<dbReference type="InterPro" id="IPR040577">
    <property type="entry name" value="Gln-synt_C"/>
</dbReference>
<dbReference type="InterPro" id="IPR008147">
    <property type="entry name" value="Gln_synt_N"/>
</dbReference>
<dbReference type="InterPro" id="IPR014746">
    <property type="entry name" value="Gln_synth/guanido_kin_cat_dom"/>
</dbReference>
<dbReference type="InterPro" id="IPR008146">
    <property type="entry name" value="Gln_synth_cat_dom"/>
</dbReference>
<dbReference type="InterPro" id="IPR027303">
    <property type="entry name" value="Gln_synth_gly_rich_site"/>
</dbReference>
<dbReference type="InterPro" id="IPR052725">
    <property type="entry name" value="GS_Type-3"/>
</dbReference>
<dbReference type="InterPro" id="IPR022147">
    <property type="entry name" value="GSIII_N"/>
</dbReference>
<dbReference type="PANTHER" id="PTHR42974">
    <property type="entry name" value="GLUTAMINE SYNTHETASE"/>
    <property type="match status" value="1"/>
</dbReference>
<dbReference type="PANTHER" id="PTHR42974:SF1">
    <property type="entry name" value="TYPE-3 GLUTAMINE SYNTHETASE"/>
    <property type="match status" value="1"/>
</dbReference>
<dbReference type="Pfam" id="PF00120">
    <property type="entry name" value="Gln-synt_C"/>
    <property type="match status" value="1"/>
</dbReference>
<dbReference type="Pfam" id="PF18318">
    <property type="entry name" value="Gln-synt_C-ter"/>
    <property type="match status" value="1"/>
</dbReference>
<dbReference type="Pfam" id="PF12437">
    <property type="entry name" value="GSIII_N"/>
    <property type="match status" value="1"/>
</dbReference>
<dbReference type="SMART" id="SM01230">
    <property type="entry name" value="Gln-synt_C"/>
    <property type="match status" value="1"/>
</dbReference>
<dbReference type="SUPFAM" id="SSF55931">
    <property type="entry name" value="Glutamine synthetase/guanido kinase"/>
    <property type="match status" value="1"/>
</dbReference>
<dbReference type="PROSITE" id="PS00181">
    <property type="entry name" value="GLNA_ATP"/>
    <property type="match status" value="1"/>
</dbReference>
<dbReference type="PROSITE" id="PS51986">
    <property type="entry name" value="GS_BETA_GRASP"/>
    <property type="match status" value="1"/>
</dbReference>
<dbReference type="PROSITE" id="PS51987">
    <property type="entry name" value="GS_CATALYTIC"/>
    <property type="match status" value="1"/>
</dbReference>
<name>GLNA3_DICDI</name>
<keyword id="KW-0067">ATP-binding</keyword>
<keyword id="KW-0436">Ligase</keyword>
<keyword id="KW-0547">Nucleotide-binding</keyword>
<keyword id="KW-1185">Reference proteome</keyword>
<proteinExistence type="evidence at protein level"/>
<evidence type="ECO:0000250" key="1"/>
<evidence type="ECO:0000255" key="2">
    <source>
        <dbReference type="PROSITE-ProRule" id="PRU01330"/>
    </source>
</evidence>
<evidence type="ECO:0000255" key="3">
    <source>
        <dbReference type="PROSITE-ProRule" id="PRU01331"/>
    </source>
</evidence>
<evidence type="ECO:0000305" key="4"/>
<sequence length="735" mass="82616">MSNRRREFIEYIDSREPVEADIDISDKADRLTDIYDSDTYGLNAMRETLPSHCYKKIREVMQTGSALDPEIADMVANGMKEWAIKQGATHYCHWFLPLNGLAAEKHDSFISIFPGDDKVLLEFSGMQLIKGEPDASSFPSGGIRSTWEARGYTVWDATSPAFIRREKNGAILCIPTAFCSWTGEALDQKTPLLRSMEYVSNESIITLSSLFNEKHKRISPTLGIEQEFFLIDRKFYLARPDLVNCGRTLIGAKPPKGQEMEDHYFGTMNSRIISCIQEVEWKMWRLGMPLKTRHNEVAPGQYEVAPIFERANIAADHNMMLMDILKNVSTKHGLVCLFHEKPFAGVNGSGKHNNWSLSTDGGSNLLEPGHTPSQNARFILFLTAIIRAVDIHADLLRASVAVPGNEHRLGANEAPPAIISIYLGKELDTVINNIINNTDIQAPGSDDMDLGVVGFPPLPKDSTDRNRTSPFAFTGNKFEFRAVGSSQVVNFPCIVLNTIVAESLRFIREEILREMKVSSRQTAFNKIIKDTLIQHVRVVFNGDGYSGDWKELAKSRGLANLPSTPEALTNINSEKNIKLFSESNILSPVELESRQEILFEIYNKSIKIEANSLYDLVSTLVLPACFAHQKNIAESVNSIMPFIQSQKSFSQPNHQYSHLSEVVESVNLLIEANQKLLALIKQTKDFNSEHSLATFLNQSVIPQMNEVRKFSDHLEGIVEDKSWPVPKYSEILFLR</sequence>
<accession>Q54WR9</accession>
<protein>
    <recommendedName>
        <fullName>Type-3 glutamine synthetase</fullName>
        <ecNumber>6.3.1.2</ecNumber>
    </recommendedName>
    <alternativeName>
        <fullName>Type-3 glutamate--ammonia ligase</fullName>
        <shortName>Type-3 GS</shortName>
    </alternativeName>
</protein>
<feature type="chain" id="PRO_0000330468" description="Type-3 glutamine synthetase">
    <location>
        <begin position="1"/>
        <end position="735"/>
    </location>
</feature>
<feature type="domain" description="GS beta-grasp" evidence="2">
    <location>
        <begin position="89"/>
        <end position="183"/>
    </location>
</feature>
<feature type="domain" description="GS catalytic" evidence="3">
    <location>
        <begin position="188"/>
        <end position="621"/>
    </location>
</feature>
<comment type="catalytic activity">
    <reaction>
        <text>L-glutamate + NH4(+) + ATP = L-glutamine + ADP + phosphate + H(+)</text>
        <dbReference type="Rhea" id="RHEA:16169"/>
        <dbReference type="ChEBI" id="CHEBI:15378"/>
        <dbReference type="ChEBI" id="CHEBI:28938"/>
        <dbReference type="ChEBI" id="CHEBI:29985"/>
        <dbReference type="ChEBI" id="CHEBI:30616"/>
        <dbReference type="ChEBI" id="CHEBI:43474"/>
        <dbReference type="ChEBI" id="CHEBI:58359"/>
        <dbReference type="ChEBI" id="CHEBI:456216"/>
        <dbReference type="EC" id="6.3.1.2"/>
    </reaction>
</comment>
<comment type="subunit">
    <text evidence="1">Homohexamer.</text>
</comment>
<comment type="similarity">
    <text evidence="4">Belongs to the glutamine synthetase family. Type 3 subfamily.</text>
</comment>
<gene>
    <name type="primary">glnA3</name>
    <name type="synonym">glnB</name>
    <name type="ORF">DDB_G0279591</name>
</gene>
<organism>
    <name type="scientific">Dictyostelium discoideum</name>
    <name type="common">Social amoeba</name>
    <dbReference type="NCBI Taxonomy" id="44689"/>
    <lineage>
        <taxon>Eukaryota</taxon>
        <taxon>Amoebozoa</taxon>
        <taxon>Evosea</taxon>
        <taxon>Eumycetozoa</taxon>
        <taxon>Dictyostelia</taxon>
        <taxon>Dictyosteliales</taxon>
        <taxon>Dictyosteliaceae</taxon>
        <taxon>Dictyostelium</taxon>
    </lineage>
</organism>
<reference key="1">
    <citation type="journal article" date="2005" name="Nature">
        <title>The genome of the social amoeba Dictyostelium discoideum.</title>
        <authorList>
            <person name="Eichinger L."/>
            <person name="Pachebat J.A."/>
            <person name="Gloeckner G."/>
            <person name="Rajandream M.A."/>
            <person name="Sucgang R."/>
            <person name="Berriman M."/>
            <person name="Song J."/>
            <person name="Olsen R."/>
            <person name="Szafranski K."/>
            <person name="Xu Q."/>
            <person name="Tunggal B."/>
            <person name="Kummerfeld S."/>
            <person name="Madera M."/>
            <person name="Konfortov B.A."/>
            <person name="Rivero F."/>
            <person name="Bankier A.T."/>
            <person name="Lehmann R."/>
            <person name="Hamlin N."/>
            <person name="Davies R."/>
            <person name="Gaudet P."/>
            <person name="Fey P."/>
            <person name="Pilcher K."/>
            <person name="Chen G."/>
            <person name="Saunders D."/>
            <person name="Sodergren E.J."/>
            <person name="Davis P."/>
            <person name="Kerhornou A."/>
            <person name="Nie X."/>
            <person name="Hall N."/>
            <person name="Anjard C."/>
            <person name="Hemphill L."/>
            <person name="Bason N."/>
            <person name="Farbrother P."/>
            <person name="Desany B."/>
            <person name="Just E."/>
            <person name="Morio T."/>
            <person name="Rost R."/>
            <person name="Churcher C.M."/>
            <person name="Cooper J."/>
            <person name="Haydock S."/>
            <person name="van Driessche N."/>
            <person name="Cronin A."/>
            <person name="Goodhead I."/>
            <person name="Muzny D.M."/>
            <person name="Mourier T."/>
            <person name="Pain A."/>
            <person name="Lu M."/>
            <person name="Harper D."/>
            <person name="Lindsay R."/>
            <person name="Hauser H."/>
            <person name="James K.D."/>
            <person name="Quiles M."/>
            <person name="Madan Babu M."/>
            <person name="Saito T."/>
            <person name="Buchrieser C."/>
            <person name="Wardroper A."/>
            <person name="Felder M."/>
            <person name="Thangavelu M."/>
            <person name="Johnson D."/>
            <person name="Knights A."/>
            <person name="Loulseged H."/>
            <person name="Mungall K.L."/>
            <person name="Oliver K."/>
            <person name="Price C."/>
            <person name="Quail M.A."/>
            <person name="Urushihara H."/>
            <person name="Hernandez J."/>
            <person name="Rabbinowitsch E."/>
            <person name="Steffen D."/>
            <person name="Sanders M."/>
            <person name="Ma J."/>
            <person name="Kohara Y."/>
            <person name="Sharp S."/>
            <person name="Simmonds M.N."/>
            <person name="Spiegler S."/>
            <person name="Tivey A."/>
            <person name="Sugano S."/>
            <person name="White B."/>
            <person name="Walker D."/>
            <person name="Woodward J.R."/>
            <person name="Winckler T."/>
            <person name="Tanaka Y."/>
            <person name="Shaulsky G."/>
            <person name="Schleicher M."/>
            <person name="Weinstock G.M."/>
            <person name="Rosenthal A."/>
            <person name="Cox E.C."/>
            <person name="Chisholm R.L."/>
            <person name="Gibbs R.A."/>
            <person name="Loomis W.F."/>
            <person name="Platzer M."/>
            <person name="Kay R.R."/>
            <person name="Williams J.G."/>
            <person name="Dear P.H."/>
            <person name="Noegel A.A."/>
            <person name="Barrell B.G."/>
            <person name="Kuspa A."/>
        </authorList>
    </citation>
    <scope>NUCLEOTIDE SEQUENCE [LARGE SCALE GENOMIC DNA]</scope>
    <source>
        <strain>AX4</strain>
    </source>
</reference>
<reference key="2">
    <citation type="journal article" date="2006" name="Mol. Cell. Proteomics">
        <title>Proteomics fingerprinting of phagosome maturation and evidence for the role of a Galpha during uptake.</title>
        <authorList>
            <person name="Gotthardt D."/>
            <person name="Blancheteau V."/>
            <person name="Bosserhoff A."/>
            <person name="Ruppert T."/>
            <person name="Delorenzi M."/>
            <person name="Soldati T."/>
        </authorList>
    </citation>
    <scope>IDENTIFICATION BY MASS SPECTROMETRY [LARGE SCALE ANALYSIS]</scope>
    <source>
        <strain>AX2</strain>
    </source>
</reference>